<sequence>MLTLKLFVYTVVIFFVSLFIFGFLSNDPGRNPGREE</sequence>
<dbReference type="EMBL" id="AJ627251">
    <property type="protein sequence ID" value="CAF28577.1"/>
    <property type="molecule type" value="Genomic_DNA"/>
</dbReference>
<dbReference type="RefSeq" id="YP_053139.1">
    <property type="nucleotide sequence ID" value="NC_006050.1"/>
</dbReference>
<dbReference type="SMR" id="Q6EW64"/>
<dbReference type="GeneID" id="2896269"/>
<dbReference type="GO" id="GO:0009535">
    <property type="term" value="C:chloroplast thylakoid membrane"/>
    <property type="evidence" value="ECO:0007669"/>
    <property type="project" value="UniProtKB-SubCell"/>
</dbReference>
<dbReference type="GO" id="GO:0009539">
    <property type="term" value="C:photosystem II reaction center"/>
    <property type="evidence" value="ECO:0007669"/>
    <property type="project" value="InterPro"/>
</dbReference>
<dbReference type="GO" id="GO:0015979">
    <property type="term" value="P:photosynthesis"/>
    <property type="evidence" value="ECO:0007669"/>
    <property type="project" value="UniProtKB-UniRule"/>
</dbReference>
<dbReference type="HAMAP" id="MF_01316">
    <property type="entry name" value="PSII_PsbI"/>
    <property type="match status" value="1"/>
</dbReference>
<dbReference type="InterPro" id="IPR003686">
    <property type="entry name" value="PSII_PsbI"/>
</dbReference>
<dbReference type="InterPro" id="IPR037271">
    <property type="entry name" value="PSII_PsbI_sf"/>
</dbReference>
<dbReference type="NCBIfam" id="NF002735">
    <property type="entry name" value="PRK02655.1"/>
    <property type="match status" value="1"/>
</dbReference>
<dbReference type="PANTHER" id="PTHR35772">
    <property type="entry name" value="PHOTOSYSTEM II REACTION CENTER PROTEIN I"/>
    <property type="match status" value="1"/>
</dbReference>
<dbReference type="PANTHER" id="PTHR35772:SF1">
    <property type="entry name" value="PHOTOSYSTEM II REACTION CENTER PROTEIN I"/>
    <property type="match status" value="1"/>
</dbReference>
<dbReference type="Pfam" id="PF02532">
    <property type="entry name" value="PsbI"/>
    <property type="match status" value="1"/>
</dbReference>
<dbReference type="SUPFAM" id="SSF161041">
    <property type="entry name" value="Photosystem II reaction center protein I, PsbI"/>
    <property type="match status" value="1"/>
</dbReference>
<organism>
    <name type="scientific">Nymphaea alba</name>
    <name type="common">White water-lily</name>
    <name type="synonym">Castalia alba</name>
    <dbReference type="NCBI Taxonomy" id="34301"/>
    <lineage>
        <taxon>Eukaryota</taxon>
        <taxon>Viridiplantae</taxon>
        <taxon>Streptophyta</taxon>
        <taxon>Embryophyta</taxon>
        <taxon>Tracheophyta</taxon>
        <taxon>Spermatophyta</taxon>
        <taxon>Magnoliopsida</taxon>
        <taxon>Nymphaeales</taxon>
        <taxon>Nymphaeaceae</taxon>
        <taxon>Nymphaea</taxon>
    </lineage>
</organism>
<feature type="chain" id="PRO_0000219637" description="Photosystem II reaction center protein I">
    <location>
        <begin position="1"/>
        <end position="36"/>
    </location>
</feature>
<feature type="transmembrane region" description="Helical" evidence="1">
    <location>
        <begin position="4"/>
        <end position="24"/>
    </location>
</feature>
<evidence type="ECO:0000255" key="1">
    <source>
        <dbReference type="HAMAP-Rule" id="MF_01316"/>
    </source>
</evidence>
<accession>Q6EW64</accession>
<name>PSBI_NYMAL</name>
<protein>
    <recommendedName>
        <fullName evidence="1">Photosystem II reaction center protein I</fullName>
        <shortName evidence="1">PSII-I</shortName>
    </recommendedName>
    <alternativeName>
        <fullName evidence="1">PSII 4.8 kDa protein</fullName>
    </alternativeName>
</protein>
<keyword id="KW-0150">Chloroplast</keyword>
<keyword id="KW-0472">Membrane</keyword>
<keyword id="KW-0602">Photosynthesis</keyword>
<keyword id="KW-0604">Photosystem II</keyword>
<keyword id="KW-0934">Plastid</keyword>
<keyword id="KW-0674">Reaction center</keyword>
<keyword id="KW-0793">Thylakoid</keyword>
<keyword id="KW-0812">Transmembrane</keyword>
<keyword id="KW-1133">Transmembrane helix</keyword>
<gene>
    <name evidence="1" type="primary">psbI</name>
</gene>
<reference key="1">
    <citation type="journal article" date="2004" name="Mol. Biol. Evol.">
        <title>The chloroplast genome of Nymphaea alba: whole-genome analyses and the problem of identifying the most basal angiosperm.</title>
        <authorList>
            <person name="Goremykin V.V."/>
            <person name="Hirsch-Ernst K.I."/>
            <person name="Woelfl S."/>
            <person name="Hellwig F.H."/>
        </authorList>
    </citation>
    <scope>NUCLEOTIDE SEQUENCE [LARGE SCALE GENOMIC DNA]</scope>
</reference>
<geneLocation type="chloroplast"/>
<proteinExistence type="inferred from homology"/>
<comment type="function">
    <text evidence="1">One of the components of the core complex of photosystem II (PSII), required for its stability and/or assembly. PSII is a light-driven water:plastoquinone oxidoreductase that uses light energy to abstract electrons from H(2)O, generating O(2) and a proton gradient subsequently used for ATP formation. It consists of a core antenna complex that captures photons, and an electron transfer chain that converts photonic excitation into a charge separation.</text>
</comment>
<comment type="subunit">
    <text evidence="1">PSII is composed of 1 copy each of membrane proteins PsbA, PsbB, PsbC, PsbD, PsbE, PsbF, PsbH, PsbI, PsbJ, PsbK, PsbL, PsbM, PsbT, PsbX, PsbY, PsbZ, Psb30/Ycf12, at least 3 peripheral proteins of the oxygen-evolving complex and a large number of cofactors. It forms dimeric complexes.</text>
</comment>
<comment type="subcellular location">
    <subcellularLocation>
        <location evidence="1">Plastid</location>
        <location evidence="1">Chloroplast thylakoid membrane</location>
        <topology evidence="1">Single-pass membrane protein</topology>
    </subcellularLocation>
</comment>
<comment type="similarity">
    <text evidence="1">Belongs to the PsbI family.</text>
</comment>